<gene>
    <name evidence="1" type="primary">tal</name>
    <name type="ordered locus">SPO3128</name>
</gene>
<reference key="1">
    <citation type="journal article" date="2004" name="Nature">
        <title>Genome sequence of Silicibacter pomeroyi reveals adaptations to the marine environment.</title>
        <authorList>
            <person name="Moran M.A."/>
            <person name="Buchan A."/>
            <person name="Gonzalez J.M."/>
            <person name="Heidelberg J.F."/>
            <person name="Whitman W.B."/>
            <person name="Kiene R.P."/>
            <person name="Henriksen J.R."/>
            <person name="King G.M."/>
            <person name="Belas R."/>
            <person name="Fuqua C."/>
            <person name="Brinkac L.M."/>
            <person name="Lewis M."/>
            <person name="Johri S."/>
            <person name="Weaver B."/>
            <person name="Pai G."/>
            <person name="Eisen J.A."/>
            <person name="Rahe E."/>
            <person name="Sheldon W.M."/>
            <person name="Ye W."/>
            <person name="Miller T.R."/>
            <person name="Carlton J."/>
            <person name="Rasko D.A."/>
            <person name="Paulsen I.T."/>
            <person name="Ren Q."/>
            <person name="Daugherty S.C."/>
            <person name="DeBoy R.T."/>
            <person name="Dodson R.J."/>
            <person name="Durkin A.S."/>
            <person name="Madupu R."/>
            <person name="Nelson W.C."/>
            <person name="Sullivan S.A."/>
            <person name="Rosovitz M.J."/>
            <person name="Haft D.H."/>
            <person name="Selengut J."/>
            <person name="Ward N."/>
        </authorList>
    </citation>
    <scope>NUCLEOTIDE SEQUENCE [LARGE SCALE GENOMIC DNA]</scope>
    <source>
        <strain>ATCC 700808 / DSM 15171 / DSS-3</strain>
    </source>
</reference>
<reference key="2">
    <citation type="journal article" date="2014" name="Stand. Genomic Sci.">
        <title>An updated genome annotation for the model marine bacterium Ruegeria pomeroyi DSS-3.</title>
        <authorList>
            <person name="Rivers A.R."/>
            <person name="Smith C.B."/>
            <person name="Moran M.A."/>
        </authorList>
    </citation>
    <scope>GENOME REANNOTATION</scope>
    <source>
        <strain>ATCC 700808 / DSM 15171 / DSS-3</strain>
    </source>
</reference>
<proteinExistence type="inferred from homology"/>
<evidence type="ECO:0000255" key="1">
    <source>
        <dbReference type="HAMAP-Rule" id="MF_00494"/>
    </source>
</evidence>
<organism>
    <name type="scientific">Ruegeria pomeroyi (strain ATCC 700808 / DSM 15171 / DSS-3)</name>
    <name type="common">Silicibacter pomeroyi</name>
    <dbReference type="NCBI Taxonomy" id="246200"/>
    <lineage>
        <taxon>Bacteria</taxon>
        <taxon>Pseudomonadati</taxon>
        <taxon>Pseudomonadota</taxon>
        <taxon>Alphaproteobacteria</taxon>
        <taxon>Rhodobacterales</taxon>
        <taxon>Roseobacteraceae</taxon>
        <taxon>Ruegeria</taxon>
    </lineage>
</organism>
<keyword id="KW-0963">Cytoplasm</keyword>
<keyword id="KW-0570">Pentose shunt</keyword>
<keyword id="KW-1185">Reference proteome</keyword>
<keyword id="KW-0704">Schiff base</keyword>
<keyword id="KW-0808">Transferase</keyword>
<dbReference type="EC" id="2.2.1.2" evidence="1"/>
<dbReference type="EMBL" id="CP000031">
    <property type="protein sequence ID" value="AAV96363.1"/>
    <property type="molecule type" value="Genomic_DNA"/>
</dbReference>
<dbReference type="RefSeq" id="WP_011048818.1">
    <property type="nucleotide sequence ID" value="NC_003911.12"/>
</dbReference>
<dbReference type="SMR" id="Q5LNS5"/>
<dbReference type="STRING" id="246200.SPO3128"/>
<dbReference type="PaxDb" id="246200-SPO3128"/>
<dbReference type="KEGG" id="sil:SPO3128"/>
<dbReference type="eggNOG" id="COG0176">
    <property type="taxonomic scope" value="Bacteria"/>
</dbReference>
<dbReference type="HOGENOM" id="CLU_079764_0_0_5"/>
<dbReference type="OrthoDB" id="9807051at2"/>
<dbReference type="UniPathway" id="UPA00115">
    <property type="reaction ID" value="UER00414"/>
</dbReference>
<dbReference type="Proteomes" id="UP000001023">
    <property type="component" value="Chromosome"/>
</dbReference>
<dbReference type="GO" id="GO:0005737">
    <property type="term" value="C:cytoplasm"/>
    <property type="evidence" value="ECO:0007669"/>
    <property type="project" value="UniProtKB-SubCell"/>
</dbReference>
<dbReference type="GO" id="GO:0016832">
    <property type="term" value="F:aldehyde-lyase activity"/>
    <property type="evidence" value="ECO:0007669"/>
    <property type="project" value="InterPro"/>
</dbReference>
<dbReference type="GO" id="GO:0004801">
    <property type="term" value="F:transaldolase activity"/>
    <property type="evidence" value="ECO:0007669"/>
    <property type="project" value="UniProtKB-UniRule"/>
</dbReference>
<dbReference type="GO" id="GO:0005975">
    <property type="term" value="P:carbohydrate metabolic process"/>
    <property type="evidence" value="ECO:0007669"/>
    <property type="project" value="InterPro"/>
</dbReference>
<dbReference type="GO" id="GO:0006098">
    <property type="term" value="P:pentose-phosphate shunt"/>
    <property type="evidence" value="ECO:0007669"/>
    <property type="project" value="UniProtKB-UniRule"/>
</dbReference>
<dbReference type="CDD" id="cd00956">
    <property type="entry name" value="Transaldolase_FSA"/>
    <property type="match status" value="1"/>
</dbReference>
<dbReference type="FunFam" id="3.20.20.70:FF:000018">
    <property type="entry name" value="Probable transaldolase"/>
    <property type="match status" value="1"/>
</dbReference>
<dbReference type="Gene3D" id="3.20.20.70">
    <property type="entry name" value="Aldolase class I"/>
    <property type="match status" value="1"/>
</dbReference>
<dbReference type="HAMAP" id="MF_00494">
    <property type="entry name" value="Transaldolase_3b"/>
    <property type="match status" value="1"/>
</dbReference>
<dbReference type="InterPro" id="IPR013785">
    <property type="entry name" value="Aldolase_TIM"/>
</dbReference>
<dbReference type="InterPro" id="IPR001585">
    <property type="entry name" value="TAL/FSA"/>
</dbReference>
<dbReference type="InterPro" id="IPR022999">
    <property type="entry name" value="Transaldolase_3B"/>
</dbReference>
<dbReference type="InterPro" id="IPR004731">
    <property type="entry name" value="Transaldolase_3B/F6P_aldolase"/>
</dbReference>
<dbReference type="InterPro" id="IPR018225">
    <property type="entry name" value="Transaldolase_AS"/>
</dbReference>
<dbReference type="InterPro" id="IPR033919">
    <property type="entry name" value="TSA/FSA_arc/bac"/>
</dbReference>
<dbReference type="NCBIfam" id="TIGR00875">
    <property type="entry name" value="fsa_talC_mipB"/>
    <property type="match status" value="1"/>
</dbReference>
<dbReference type="PANTHER" id="PTHR10683:SF40">
    <property type="entry name" value="FRUCTOSE-6-PHOSPHATE ALDOLASE 1-RELATED"/>
    <property type="match status" value="1"/>
</dbReference>
<dbReference type="PANTHER" id="PTHR10683">
    <property type="entry name" value="TRANSALDOLASE"/>
    <property type="match status" value="1"/>
</dbReference>
<dbReference type="Pfam" id="PF00923">
    <property type="entry name" value="TAL_FSA"/>
    <property type="match status" value="1"/>
</dbReference>
<dbReference type="SUPFAM" id="SSF51569">
    <property type="entry name" value="Aldolase"/>
    <property type="match status" value="1"/>
</dbReference>
<dbReference type="PROSITE" id="PS01054">
    <property type="entry name" value="TRANSALDOLASE_1"/>
    <property type="match status" value="1"/>
</dbReference>
<dbReference type="PROSITE" id="PS00958">
    <property type="entry name" value="TRANSALDOLASE_2"/>
    <property type="match status" value="1"/>
</dbReference>
<name>TAL_RUEPO</name>
<accession>Q5LNS5</accession>
<comment type="function">
    <text evidence="1">Transaldolase is important for the balance of metabolites in the pentose-phosphate pathway.</text>
</comment>
<comment type="catalytic activity">
    <reaction evidence="1">
        <text>D-sedoheptulose 7-phosphate + D-glyceraldehyde 3-phosphate = D-erythrose 4-phosphate + beta-D-fructose 6-phosphate</text>
        <dbReference type="Rhea" id="RHEA:17053"/>
        <dbReference type="ChEBI" id="CHEBI:16897"/>
        <dbReference type="ChEBI" id="CHEBI:57483"/>
        <dbReference type="ChEBI" id="CHEBI:57634"/>
        <dbReference type="ChEBI" id="CHEBI:59776"/>
        <dbReference type="EC" id="2.2.1.2"/>
    </reaction>
</comment>
<comment type="pathway">
    <text evidence="1">Carbohydrate degradation; pentose phosphate pathway; D-glyceraldehyde 3-phosphate and beta-D-fructose 6-phosphate from D-ribose 5-phosphate and D-xylulose 5-phosphate (non-oxidative stage): step 2/3.</text>
</comment>
<comment type="subcellular location">
    <subcellularLocation>
        <location evidence="1">Cytoplasm</location>
    </subcellularLocation>
</comment>
<comment type="similarity">
    <text evidence="1">Belongs to the transaldolase family. Type 3B subfamily.</text>
</comment>
<protein>
    <recommendedName>
        <fullName evidence="1">Probable transaldolase</fullName>
        <ecNumber evidence="1">2.2.1.2</ecNumber>
    </recommendedName>
</protein>
<sequence>MKFFVDTAEIDAIAELNDLGMVDGVTTNPSLIKKSGRDIIEVTREICAMVDGPVSAEVTATDAETMIAEGRKLVEIAGNIAVKVPLTWDGLKACKVLSDDGHMVNVTLCFSANQALLAAKAGATFISPFIGRLDDINLDGMELIEDIRTIYDNYGFETQILAASIRSVNHILDSARIGADVITAPPAVIKAMVNHPLTDKGLDAFLADIKAADIKIL</sequence>
<feature type="chain" id="PRO_1000126354" description="Probable transaldolase">
    <location>
        <begin position="1"/>
        <end position="217"/>
    </location>
</feature>
<feature type="active site" description="Schiff-base intermediate with substrate" evidence="1">
    <location>
        <position position="83"/>
    </location>
</feature>